<organism>
    <name type="scientific">Gallid herpesvirus 2 (strain Chicken/Md5/ATCC VR-987)</name>
    <name type="common">GaHV-2</name>
    <name type="synonym">Marek's disease herpesvirus type 1</name>
    <dbReference type="NCBI Taxonomy" id="10389"/>
    <lineage>
        <taxon>Viruses</taxon>
        <taxon>Duplodnaviria</taxon>
        <taxon>Heunggongvirae</taxon>
        <taxon>Peploviricota</taxon>
        <taxon>Herviviricetes</taxon>
        <taxon>Herpesvirales</taxon>
        <taxon>Orthoherpesviridae</taxon>
        <taxon>Alphaherpesvirinae</taxon>
        <taxon>Mardivirus</taxon>
        <taxon>Mardivirus gallidalpha2</taxon>
        <taxon>Gallid alphaherpesvirus 2</taxon>
    </lineage>
</organism>
<keyword id="KW-1185">Reference proteome</keyword>
<dbReference type="EMBL" id="AF243438">
    <property type="protein sequence ID" value="AAG14286.1"/>
    <property type="molecule type" value="Genomic_DNA"/>
</dbReference>
<dbReference type="EMBL" id="AF243438">
    <property type="protein sequence ID" value="AAG14289.1"/>
    <property type="molecule type" value="Genomic_DNA"/>
</dbReference>
<dbReference type="Proteomes" id="UP000008072">
    <property type="component" value="Segment"/>
</dbReference>
<organismHost>
    <name type="scientific">Gallus gallus</name>
    <name type="common">Chicken</name>
    <dbReference type="NCBI Taxonomy" id="9031"/>
</organismHost>
<feature type="chain" id="PRO_0000406553" description="Uncharacterized gene 6b protein">
    <location>
        <begin position="1"/>
        <end position="93"/>
    </location>
</feature>
<protein>
    <recommendedName>
        <fullName>Uncharacterized gene 6b protein</fullName>
    </recommendedName>
</protein>
<gene>
    <name type="primary">MDV006</name>
    <name type="synonym">MDV075</name>
</gene>
<proteinExistence type="predicted"/>
<reference key="1">
    <citation type="journal article" date="2000" name="J. Virol.">
        <title>The genome of a very virulent Marek's disease virus.</title>
        <authorList>
            <person name="Tulman E.R."/>
            <person name="Afonso C.L."/>
            <person name="Lu Z."/>
            <person name="Zsak L."/>
            <person name="Rock D.L."/>
            <person name="Kutish G.F."/>
        </authorList>
    </citation>
    <scope>NUCLEOTIDE SEQUENCE [LARGE SCALE GENOMIC DNA]</scope>
</reference>
<accession>Q77MT3</accession>
<name>VG06B_GAHVM</name>
<sequence length="93" mass="10254">MINTTAERNPSQLSIDTALGGNDPGCIDCGPTFHLETDTATTRNGTSSFGDRIRSFCERARSLISNFVTWRSRNESCEVLAEIPQEKEVESTL</sequence>